<protein>
    <recommendedName>
        <fullName>Ribonucleoside-diphosphate reductase large subunit</fullName>
        <ecNumber>1.17.4.1</ecNumber>
    </recommendedName>
    <alternativeName>
        <fullName>Ribonucleotide reductase large subunit</fullName>
    </alternativeName>
</protein>
<evidence type="ECO:0000250" key="1"/>
<evidence type="ECO:0000250" key="2">
    <source>
        <dbReference type="UniProtKB" id="P23921"/>
    </source>
</evidence>
<evidence type="ECO:0000255" key="3">
    <source>
        <dbReference type="PROSITE-ProRule" id="PRU00492"/>
    </source>
</evidence>
<evidence type="ECO:0000305" key="4"/>
<gene>
    <name type="primary">rnr-1</name>
    <name type="ORF">T23G5.1</name>
</gene>
<sequence>MQRYNSTYVVKRDGRKEDVHFDKITSRIQKLSYGLNMDFVDPVAVAIKVISGLYKGVTTVELDNLAAETAASMTTQHPEYALLAARIAVSNLHKKTNKVFSEVMKTLHEFHHPHTGKHAPMISDETWAIIEKNADKLNSAIVYDRDYSYTYFGFKTLERSYLLKINKEIVERPQQMLMRVSIGIHGDDITSAIETYNLMSERYMTHASPTLFNSGTCRPQMSSCFLLTMSEDSILGIYDTLKQCALISKSAGGIGLNVHKIRATGSVIAGTNGTSNGLIPMLRVYNNTARYVDQGGNKRPGAFAIYLEPWHADIFEFVSLRKNTGPEEERARDLFLALWIPDLFMKRVEKDQEWSLMCPCECPGLDDCWGEEFEALYAKYEAEGRVRKTVKARKLWEHIVSNQIETGLPYITYKDAANRKSNQQNLGTIKCSNLCTEIIEYSAPDEIAVCNLASIALNRYVTPEKKFDFVKLAEVTKVITRNLNKIIDVNYYPVEEARNSNMRHRPIGLGVQGLADCFMLMRYPFTSAEARDLNKRIFETIYYAALEASCELAELNGPYSTYEGSPVSKGQLQFDMWGVTPTDQCDWATLRKKIAKHGIRNSLLMAPMPTASTAQILGNNESIEPYTSNIYSRRVLSGDFQIVNPHMLKDLVERGLWTDEMKNRLIANNGSIQNIDGIPSDIKELYRTVWEISQKDIIEMAADRGAYIDQSQSLNIHMAKPSYAGITSMHFYGWKKGLKTGMYYLRTKPAVNAVQFTVDKNALKTNQQAETPATVAESQDEGCLMCSG</sequence>
<dbReference type="EC" id="1.17.4.1"/>
<dbReference type="EMBL" id="Z19158">
    <property type="protein sequence ID" value="CAA79574.1"/>
    <property type="molecule type" value="Genomic_DNA"/>
</dbReference>
<dbReference type="PIR" id="S28302">
    <property type="entry name" value="S28302"/>
</dbReference>
<dbReference type="RefSeq" id="NP_001369835.1">
    <property type="nucleotide sequence ID" value="NM_001382958.2"/>
</dbReference>
<dbReference type="RefSeq" id="NP_499039.1">
    <property type="nucleotide sequence ID" value="NM_066638.4"/>
</dbReference>
<dbReference type="SMR" id="Q03604"/>
<dbReference type="BioGRID" id="41500">
    <property type="interactions" value="29"/>
</dbReference>
<dbReference type="DIP" id="DIP-26889N"/>
<dbReference type="FunCoup" id="Q03604">
    <property type="interactions" value="2516"/>
</dbReference>
<dbReference type="IntAct" id="Q03604">
    <property type="interactions" value="3"/>
</dbReference>
<dbReference type="STRING" id="6239.T23G5.1.2"/>
<dbReference type="iPTMnet" id="Q03604"/>
<dbReference type="PaxDb" id="6239-T23G5.1.1"/>
<dbReference type="PeptideAtlas" id="Q03604"/>
<dbReference type="EnsemblMetazoa" id="T23G5.1.1">
    <property type="protein sequence ID" value="T23G5.1.1"/>
    <property type="gene ID" value="WBGene00004391"/>
</dbReference>
<dbReference type="EnsemblMetazoa" id="T23G5.1.2">
    <property type="protein sequence ID" value="T23G5.1.2"/>
    <property type="gene ID" value="WBGene00004391"/>
</dbReference>
<dbReference type="GeneID" id="176301"/>
<dbReference type="UCSC" id="T23G5.1.2">
    <property type="organism name" value="c. elegans"/>
</dbReference>
<dbReference type="AGR" id="WB:WBGene00004391"/>
<dbReference type="WormBase" id="T23G5.1">
    <property type="protein sequence ID" value="CE00331"/>
    <property type="gene ID" value="WBGene00004391"/>
    <property type="gene designation" value="rnr-1"/>
</dbReference>
<dbReference type="eggNOG" id="KOG1112">
    <property type="taxonomic scope" value="Eukaryota"/>
</dbReference>
<dbReference type="GeneTree" id="ENSGT00910000144246"/>
<dbReference type="HOGENOM" id="CLU_000404_1_2_1"/>
<dbReference type="InParanoid" id="Q03604"/>
<dbReference type="OMA" id="IELPQHM"/>
<dbReference type="OrthoDB" id="3000483at2759"/>
<dbReference type="PhylomeDB" id="Q03604"/>
<dbReference type="Reactome" id="R-CEL-499943">
    <property type="pathway name" value="Interconversion of nucleotide di- and triphosphates"/>
</dbReference>
<dbReference type="PRO" id="PR:Q03604"/>
<dbReference type="Proteomes" id="UP000001940">
    <property type="component" value="Chromosome III"/>
</dbReference>
<dbReference type="Bgee" id="WBGene00004391">
    <property type="expression patterns" value="Expressed in germ line (C elegans) and 4 other cell types or tissues"/>
</dbReference>
<dbReference type="GO" id="GO:0005971">
    <property type="term" value="C:ribonucleoside-diphosphate reductase complex"/>
    <property type="evidence" value="ECO:0000318"/>
    <property type="project" value="GO_Central"/>
</dbReference>
<dbReference type="GO" id="GO:0005524">
    <property type="term" value="F:ATP binding"/>
    <property type="evidence" value="ECO:0000318"/>
    <property type="project" value="GO_Central"/>
</dbReference>
<dbReference type="GO" id="GO:0004748">
    <property type="term" value="F:ribonucleoside-diphosphate reductase activity, thioredoxin disulfide as acceptor"/>
    <property type="evidence" value="ECO:0000250"/>
    <property type="project" value="UniProtKB"/>
</dbReference>
<dbReference type="GO" id="GO:0009263">
    <property type="term" value="P:deoxyribonucleotide biosynthetic process"/>
    <property type="evidence" value="ECO:0000250"/>
    <property type="project" value="UniProtKB"/>
</dbReference>
<dbReference type="CDD" id="cd01679">
    <property type="entry name" value="RNR_I"/>
    <property type="match status" value="1"/>
</dbReference>
<dbReference type="FunFam" id="3.20.70.20:FF:000010">
    <property type="entry name" value="Ribonucleoside-diphosphate reductase"/>
    <property type="match status" value="1"/>
</dbReference>
<dbReference type="Gene3D" id="3.20.70.20">
    <property type="match status" value="1"/>
</dbReference>
<dbReference type="InterPro" id="IPR005144">
    <property type="entry name" value="ATP-cone_dom"/>
</dbReference>
<dbReference type="InterPro" id="IPR013346">
    <property type="entry name" value="NrdE_NrdA_C"/>
</dbReference>
<dbReference type="InterPro" id="IPR000788">
    <property type="entry name" value="RNR_lg_C"/>
</dbReference>
<dbReference type="InterPro" id="IPR013509">
    <property type="entry name" value="RNR_lsu_N"/>
</dbReference>
<dbReference type="InterPro" id="IPR008926">
    <property type="entry name" value="RNR_R1-su_N"/>
</dbReference>
<dbReference type="InterPro" id="IPR039718">
    <property type="entry name" value="Rrm1"/>
</dbReference>
<dbReference type="NCBIfam" id="TIGR02506">
    <property type="entry name" value="NrdE_NrdA"/>
    <property type="match status" value="1"/>
</dbReference>
<dbReference type="PANTHER" id="PTHR11573">
    <property type="entry name" value="RIBONUCLEOSIDE-DIPHOSPHATE REDUCTASE LARGE CHAIN"/>
    <property type="match status" value="1"/>
</dbReference>
<dbReference type="PANTHER" id="PTHR11573:SF6">
    <property type="entry name" value="RIBONUCLEOSIDE-DIPHOSPHATE REDUCTASE LARGE SUBUNIT"/>
    <property type="match status" value="1"/>
</dbReference>
<dbReference type="Pfam" id="PF03477">
    <property type="entry name" value="ATP-cone"/>
    <property type="match status" value="1"/>
</dbReference>
<dbReference type="Pfam" id="PF02867">
    <property type="entry name" value="Ribonuc_red_lgC"/>
    <property type="match status" value="1"/>
</dbReference>
<dbReference type="Pfam" id="PF00317">
    <property type="entry name" value="Ribonuc_red_lgN"/>
    <property type="match status" value="1"/>
</dbReference>
<dbReference type="PRINTS" id="PR01183">
    <property type="entry name" value="RIBORDTASEM1"/>
</dbReference>
<dbReference type="SUPFAM" id="SSF51998">
    <property type="entry name" value="PFL-like glycyl radical enzymes"/>
    <property type="match status" value="1"/>
</dbReference>
<dbReference type="SUPFAM" id="SSF48168">
    <property type="entry name" value="R1 subunit of ribonucleotide reductase, N-terminal domain"/>
    <property type="match status" value="1"/>
</dbReference>
<dbReference type="PROSITE" id="PS51161">
    <property type="entry name" value="ATP_CONE"/>
    <property type="match status" value="1"/>
</dbReference>
<dbReference type="PROSITE" id="PS00089">
    <property type="entry name" value="RIBORED_LARGE"/>
    <property type="match status" value="1"/>
</dbReference>
<proteinExistence type="inferred from homology"/>
<reference key="1">
    <citation type="journal article" date="1994" name="Nature">
        <title>2.2 Mb of contiguous nucleotide sequence from chromosome III of C. elegans.</title>
        <authorList>
            <person name="Wilson R."/>
            <person name="Ainscough R."/>
            <person name="Anderson K."/>
            <person name="Baynes C."/>
            <person name="Berks M."/>
            <person name="Bonfield J."/>
            <person name="Burton J."/>
            <person name="Connell M."/>
            <person name="Copsey T."/>
            <person name="Cooper J."/>
            <person name="Coulson A."/>
            <person name="Craxton M."/>
            <person name="Dear S."/>
            <person name="Du Z."/>
            <person name="Durbin R."/>
            <person name="Favello A."/>
            <person name="Fraser A."/>
            <person name="Fulton L."/>
            <person name="Gardner A."/>
            <person name="Green P."/>
            <person name="Hawkins T."/>
            <person name="Hillier L."/>
            <person name="Jier M."/>
            <person name="Johnston L."/>
            <person name="Jones M."/>
            <person name="Kershaw J."/>
            <person name="Kirsten J."/>
            <person name="Laisster N."/>
            <person name="Latreille P."/>
            <person name="Lightning J."/>
            <person name="Lloyd C."/>
            <person name="Mortimore B."/>
            <person name="O'Callaghan M."/>
            <person name="Parsons J."/>
            <person name="Percy C."/>
            <person name="Rifken L."/>
            <person name="Roopra A."/>
            <person name="Saunders D."/>
            <person name="Shownkeen R."/>
            <person name="Sims M."/>
            <person name="Smaldon N."/>
            <person name="Smith A."/>
            <person name="Smith M."/>
            <person name="Sonnhammer E."/>
            <person name="Staden R."/>
            <person name="Sulston J."/>
            <person name="Thierry-Mieg J."/>
            <person name="Thomas K."/>
            <person name="Vaudin M."/>
            <person name="Vaughan K."/>
            <person name="Waterston R."/>
            <person name="Watson A."/>
            <person name="Weinstock L."/>
            <person name="Wilkinson-Sproat J."/>
            <person name="Wohldman P."/>
        </authorList>
    </citation>
    <scope>NUCLEOTIDE SEQUENCE [LARGE SCALE GENOMIC DNA]</scope>
    <source>
        <strain>Bristol N2</strain>
    </source>
</reference>
<reference key="2">
    <citation type="journal article" date="1998" name="Science">
        <title>Genome sequence of the nematode C. elegans: a platform for investigating biology.</title>
        <authorList>
            <consortium name="The C. elegans sequencing consortium"/>
        </authorList>
    </citation>
    <scope>NUCLEOTIDE SEQUENCE [LARGE SCALE GENOMIC DNA]</scope>
    <source>
        <strain>Bristol N2</strain>
    </source>
</reference>
<accession>Q03604</accession>
<comment type="function">
    <text>Provides the precursors necessary for DNA synthesis. Catalyzes the biosynthesis of deoxyribonucleotides from the corresponding ribonucleotides.</text>
</comment>
<comment type="catalytic activity">
    <reaction>
        <text>a 2'-deoxyribonucleoside 5'-diphosphate + [thioredoxin]-disulfide + H2O = a ribonucleoside 5'-diphosphate + [thioredoxin]-dithiol</text>
        <dbReference type="Rhea" id="RHEA:23252"/>
        <dbReference type="Rhea" id="RHEA-COMP:10698"/>
        <dbReference type="Rhea" id="RHEA-COMP:10700"/>
        <dbReference type="ChEBI" id="CHEBI:15377"/>
        <dbReference type="ChEBI" id="CHEBI:29950"/>
        <dbReference type="ChEBI" id="CHEBI:50058"/>
        <dbReference type="ChEBI" id="CHEBI:57930"/>
        <dbReference type="ChEBI" id="CHEBI:73316"/>
        <dbReference type="EC" id="1.17.4.1"/>
    </reaction>
</comment>
<comment type="activity regulation">
    <text evidence="1">Under complex allosteric control mediated by deoxynucleoside triphosphates and ATP binding to separate specificity and activation sites on the large subunit. The type of nucleotide bound at the specificity site determines substrate preference. It seems probable that ATP makes the enzyme reduce CDP and UDP, dGTP favors ADP reduction and dTTP favors GDP reduction. Stimulated by ATP and inhibited by dATP binding to the activity site (By similarity).</text>
</comment>
<comment type="subunit">
    <text>Heterodimer of a large and a small subunit.</text>
</comment>
<comment type="similarity">
    <text evidence="4">Belongs to the ribonucleoside diphosphate reductase large chain family.</text>
</comment>
<organism>
    <name type="scientific">Caenorhabditis elegans</name>
    <dbReference type="NCBI Taxonomy" id="6239"/>
    <lineage>
        <taxon>Eukaryota</taxon>
        <taxon>Metazoa</taxon>
        <taxon>Ecdysozoa</taxon>
        <taxon>Nematoda</taxon>
        <taxon>Chromadorea</taxon>
        <taxon>Rhabditida</taxon>
        <taxon>Rhabditina</taxon>
        <taxon>Rhabditomorpha</taxon>
        <taxon>Rhabditoidea</taxon>
        <taxon>Rhabditidae</taxon>
        <taxon>Peloderinae</taxon>
        <taxon>Caenorhabditis</taxon>
    </lineage>
</organism>
<feature type="chain" id="PRO_0000187194" description="Ribonucleoside-diphosphate reductase large subunit">
    <location>
        <begin position="1"/>
        <end position="788"/>
    </location>
</feature>
<feature type="domain" description="ATP-cone" evidence="3">
    <location>
        <begin position="7"/>
        <end position="98"/>
    </location>
</feature>
<feature type="active site" description="Proton acceptor" evidence="1">
    <location>
        <position position="433"/>
    </location>
</feature>
<feature type="active site" description="Cysteine radical intermediate" evidence="1">
    <location>
        <position position="435"/>
    </location>
</feature>
<feature type="active site" description="Proton acceptor" evidence="1">
    <location>
        <position position="437"/>
    </location>
</feature>
<feature type="binding site" evidence="2">
    <location>
        <begin position="11"/>
        <end position="12"/>
    </location>
    <ligand>
        <name>ATP</name>
        <dbReference type="ChEBI" id="CHEBI:30616"/>
        <note>allosteric activator</note>
    </ligand>
</feature>
<feature type="binding site" evidence="2">
    <location>
        <begin position="17"/>
        <end position="23"/>
    </location>
    <ligand>
        <name>ATP</name>
        <dbReference type="ChEBI" id="CHEBI:30616"/>
        <note>allosteric activator</note>
    </ligand>
</feature>
<feature type="binding site" evidence="2">
    <location>
        <position position="59"/>
    </location>
    <ligand>
        <name>ATP</name>
        <dbReference type="ChEBI" id="CHEBI:30616"/>
        <note>allosteric activator</note>
    </ligand>
</feature>
<feature type="binding site" evidence="2">
    <location>
        <position position="63"/>
    </location>
    <ligand>
        <name>ATP</name>
        <dbReference type="ChEBI" id="CHEBI:30616"/>
        <note>allosteric activator</note>
    </ligand>
</feature>
<feature type="binding site" evidence="2">
    <location>
        <position position="208"/>
    </location>
    <ligand>
        <name>GDP</name>
        <dbReference type="ChEBI" id="CHEBI:58189"/>
    </ligand>
</feature>
<feature type="binding site" evidence="2">
    <location>
        <position position="223"/>
    </location>
    <ligand>
        <name>GDP</name>
        <dbReference type="ChEBI" id="CHEBI:58189"/>
    </ligand>
</feature>
<feature type="binding site" evidence="2">
    <location>
        <begin position="232"/>
        <end position="234"/>
    </location>
    <ligand>
        <name>dTTP</name>
        <dbReference type="ChEBI" id="CHEBI:37568"/>
        <note>allosteric effector that controls substrate specificity</note>
    </ligand>
</feature>
<feature type="binding site" evidence="2">
    <location>
        <position position="249"/>
    </location>
    <ligand>
        <name>dTTP</name>
        <dbReference type="ChEBI" id="CHEBI:37568"/>
        <note>allosteric effector that controls substrate specificity</note>
    </ligand>
</feature>
<feature type="binding site" evidence="2">
    <location>
        <position position="262"/>
    </location>
    <ligand>
        <name>dTTP</name>
        <dbReference type="ChEBI" id="CHEBI:37568"/>
        <note>allosteric effector that controls substrate specificity</note>
    </ligand>
</feature>
<feature type="binding site" evidence="2">
    <location>
        <begin position="269"/>
        <end position="270"/>
    </location>
    <ligand>
        <name>dTTP</name>
        <dbReference type="ChEBI" id="CHEBI:37568"/>
        <note>allosteric effector that controls substrate specificity</note>
    </ligand>
</feature>
<feature type="binding site" evidence="2">
    <location>
        <position position="433"/>
    </location>
    <ligand>
        <name>GDP</name>
        <dbReference type="ChEBI" id="CHEBI:58189"/>
    </ligand>
</feature>
<feature type="binding site" evidence="2">
    <location>
        <position position="437"/>
    </location>
    <ligand>
        <name>GDP</name>
        <dbReference type="ChEBI" id="CHEBI:58189"/>
    </ligand>
</feature>
<feature type="binding site" evidence="2">
    <location>
        <begin position="610"/>
        <end position="613"/>
    </location>
    <ligand>
        <name>GDP</name>
        <dbReference type="ChEBI" id="CHEBI:58189"/>
    </ligand>
</feature>
<feature type="site" description="Important for hydrogen atom transfer" evidence="1">
    <location>
        <position position="224"/>
    </location>
</feature>
<feature type="site" description="Important for hydrogen atom transfer" evidence="1">
    <location>
        <position position="450"/>
    </location>
</feature>
<feature type="site" description="Important for electron transfer" evidence="1">
    <location>
        <position position="743"/>
    </location>
</feature>
<feature type="site" description="Important for electron transfer" evidence="1">
    <location>
        <position position="744"/>
    </location>
</feature>
<feature type="site" description="Interacts with thioredoxin/glutaredoxin" evidence="1">
    <location>
        <position position="783"/>
    </location>
</feature>
<feature type="site" description="Interacts with thioredoxin/glutaredoxin" evidence="1">
    <location>
        <position position="786"/>
    </location>
</feature>
<feature type="disulfide bond" description="Redox-active" evidence="1">
    <location>
        <begin position="224"/>
        <end position="450"/>
    </location>
</feature>
<name>RIR1_CAEEL</name>
<keyword id="KW-0021">Allosteric enzyme</keyword>
<keyword id="KW-0067">ATP-binding</keyword>
<keyword id="KW-0215">Deoxyribonucleotide synthesis</keyword>
<keyword id="KW-1015">Disulfide bond</keyword>
<keyword id="KW-0547">Nucleotide-binding</keyword>
<keyword id="KW-0560">Oxidoreductase</keyword>
<keyword id="KW-1185">Reference proteome</keyword>